<keyword id="KW-1185">Reference proteome</keyword>
<protein>
    <recommendedName>
        <fullName evidence="1">Putative regulatory protein Cphy_2880</fullName>
    </recommendedName>
</protein>
<accession>A9KPG4</accession>
<evidence type="ECO:0000255" key="1">
    <source>
        <dbReference type="HAMAP-Rule" id="MF_01503"/>
    </source>
</evidence>
<dbReference type="EMBL" id="CP000885">
    <property type="protein sequence ID" value="ABX43238.1"/>
    <property type="molecule type" value="Genomic_DNA"/>
</dbReference>
<dbReference type="RefSeq" id="WP_012200889.1">
    <property type="nucleotide sequence ID" value="NC_010001.1"/>
</dbReference>
<dbReference type="SMR" id="A9KPG4"/>
<dbReference type="STRING" id="357809.Cphy_2880"/>
<dbReference type="KEGG" id="cpy:Cphy_2880"/>
<dbReference type="eggNOG" id="COG2052">
    <property type="taxonomic scope" value="Bacteria"/>
</dbReference>
<dbReference type="HOGENOM" id="CLU_165326_0_0_9"/>
<dbReference type="OrthoDB" id="5432174at2"/>
<dbReference type="Proteomes" id="UP000000370">
    <property type="component" value="Chromosome"/>
</dbReference>
<dbReference type="HAMAP" id="MF_01503">
    <property type="entry name" value="RemA"/>
    <property type="match status" value="1"/>
</dbReference>
<dbReference type="InterPro" id="IPR007169">
    <property type="entry name" value="RemA-like"/>
</dbReference>
<dbReference type="NCBIfam" id="NF003315">
    <property type="entry name" value="PRK04323.1"/>
    <property type="match status" value="1"/>
</dbReference>
<dbReference type="PANTHER" id="PTHR38449:SF1">
    <property type="entry name" value="REGULATORY PROTEIN SSL2874-RELATED"/>
    <property type="match status" value="1"/>
</dbReference>
<dbReference type="PANTHER" id="PTHR38449">
    <property type="entry name" value="REGULATORY PROTEIN TM_1690-RELATED"/>
    <property type="match status" value="1"/>
</dbReference>
<dbReference type="Pfam" id="PF04025">
    <property type="entry name" value="RemA-like"/>
    <property type="match status" value="1"/>
</dbReference>
<comment type="similarity">
    <text evidence="1">Belongs to the RemA family.</text>
</comment>
<organism>
    <name type="scientific">Lachnoclostridium phytofermentans (strain ATCC 700394 / DSM 18823 / ISDg)</name>
    <name type="common">Clostridium phytofermentans</name>
    <dbReference type="NCBI Taxonomy" id="357809"/>
    <lineage>
        <taxon>Bacteria</taxon>
        <taxon>Bacillati</taxon>
        <taxon>Bacillota</taxon>
        <taxon>Clostridia</taxon>
        <taxon>Lachnospirales</taxon>
        <taxon>Lachnospiraceae</taxon>
    </lineage>
</organism>
<feature type="chain" id="PRO_0000373779" description="Putative regulatory protein Cphy_2880">
    <location>
        <begin position="1"/>
        <end position="91"/>
    </location>
</feature>
<reference key="1">
    <citation type="submission" date="2007-11" db="EMBL/GenBank/DDBJ databases">
        <title>Complete genome sequence of Clostridium phytofermentans ISDg.</title>
        <authorList>
            <person name="Leschine S.B."/>
            <person name="Warnick T.A."/>
            <person name="Blanchard J.L."/>
            <person name="Schnell D.J."/>
            <person name="Petit E.L."/>
            <person name="LaTouf W.G."/>
            <person name="Copeland A."/>
            <person name="Lucas S."/>
            <person name="Lapidus A."/>
            <person name="Barry K."/>
            <person name="Glavina del Rio T."/>
            <person name="Dalin E."/>
            <person name="Tice H."/>
            <person name="Pitluck S."/>
            <person name="Kiss H."/>
            <person name="Brettin T."/>
            <person name="Bruce D."/>
            <person name="Detter J.C."/>
            <person name="Han C."/>
            <person name="Kuske C."/>
            <person name="Schmutz J."/>
            <person name="Larimer F."/>
            <person name="Land M."/>
            <person name="Hauser L."/>
            <person name="Kyrpides N."/>
            <person name="Kim E.A."/>
            <person name="Richardson P."/>
        </authorList>
    </citation>
    <scope>NUCLEOTIDE SEQUENCE [LARGE SCALE GENOMIC DNA]</scope>
    <source>
        <strain>ATCC 700394 / DSM 18823 / ISDg</strain>
    </source>
</reference>
<proteinExistence type="inferred from homology"/>
<name>Y2880_LACP7</name>
<sequence length="91" mass="9755">MNKLINIGFGNVVNAGKIISVIRPEAAPVKRMVQNAKDSGSCVDATCGRKCKAVVVMETGQIVLSALLPETIANRVNQRESIESNEVFQAL</sequence>
<gene>
    <name type="ordered locus">Cphy_2880</name>
</gene>